<keyword id="KW-0479">Metal-binding</keyword>
<keyword id="KW-0520">NAD</keyword>
<keyword id="KW-0521">NADP</keyword>
<keyword id="KW-0558">Oxidation</keyword>
<keyword id="KW-0560">Oxidoreductase</keyword>
<keyword id="KW-0630">Potassium</keyword>
<comment type="function">
    <text evidence="1">Involved in the biosynthesis of the osmoprotectant glycine betaine. Catalyzes the irreversible oxidation of betaine aldehyde to the corresponding acid.</text>
</comment>
<comment type="catalytic activity">
    <reaction evidence="1">
        <text>betaine aldehyde + NAD(+) + H2O = glycine betaine + NADH + 2 H(+)</text>
        <dbReference type="Rhea" id="RHEA:15305"/>
        <dbReference type="ChEBI" id="CHEBI:15377"/>
        <dbReference type="ChEBI" id="CHEBI:15378"/>
        <dbReference type="ChEBI" id="CHEBI:15710"/>
        <dbReference type="ChEBI" id="CHEBI:17750"/>
        <dbReference type="ChEBI" id="CHEBI:57540"/>
        <dbReference type="ChEBI" id="CHEBI:57945"/>
        <dbReference type="EC" id="1.2.1.8"/>
    </reaction>
    <physiologicalReaction direction="left-to-right" evidence="1">
        <dbReference type="Rhea" id="RHEA:15306"/>
    </physiologicalReaction>
</comment>
<comment type="cofactor">
    <cofactor evidence="1">
        <name>K(+)</name>
        <dbReference type="ChEBI" id="CHEBI:29103"/>
    </cofactor>
    <text evidence="1">Binds 2 potassium ions per subunit.</text>
</comment>
<comment type="pathway">
    <text evidence="1">Amine and polyamine biosynthesis; betaine biosynthesis via choline pathway; betaine from betaine aldehyde: step 1/1.</text>
</comment>
<comment type="subunit">
    <text evidence="1">Dimer of dimers.</text>
</comment>
<comment type="similarity">
    <text evidence="1">Belongs to the aldehyde dehydrogenase family.</text>
</comment>
<dbReference type="EC" id="1.2.1.8" evidence="1"/>
<dbReference type="EMBL" id="CP000946">
    <property type="protein sequence ID" value="ACA78933.1"/>
    <property type="molecule type" value="Genomic_DNA"/>
</dbReference>
<dbReference type="RefSeq" id="WP_000089113.1">
    <property type="nucleotide sequence ID" value="NZ_MTFT01000010.1"/>
</dbReference>
<dbReference type="SMR" id="B1J0W5"/>
<dbReference type="KEGG" id="ecl:EcolC_3311"/>
<dbReference type="HOGENOM" id="CLU_005391_0_0_6"/>
<dbReference type="UniPathway" id="UPA00529">
    <property type="reaction ID" value="UER00386"/>
</dbReference>
<dbReference type="GO" id="GO:0008802">
    <property type="term" value="F:betaine-aldehyde dehydrogenase (NAD+) activity"/>
    <property type="evidence" value="ECO:0007669"/>
    <property type="project" value="UniProtKB-UniRule"/>
</dbReference>
<dbReference type="GO" id="GO:0046872">
    <property type="term" value="F:metal ion binding"/>
    <property type="evidence" value="ECO:0007669"/>
    <property type="project" value="UniProtKB-KW"/>
</dbReference>
<dbReference type="GO" id="GO:0019285">
    <property type="term" value="P:glycine betaine biosynthetic process from choline"/>
    <property type="evidence" value="ECO:0007669"/>
    <property type="project" value="UniProtKB-UniRule"/>
</dbReference>
<dbReference type="CDD" id="cd07090">
    <property type="entry name" value="ALDH_F9_TMBADH"/>
    <property type="match status" value="1"/>
</dbReference>
<dbReference type="FunFam" id="3.40.309.10:FF:000014">
    <property type="entry name" value="NAD/NADP-dependent betaine aldehyde dehydrogenase"/>
    <property type="match status" value="1"/>
</dbReference>
<dbReference type="FunFam" id="3.40.605.10:FF:000007">
    <property type="entry name" value="NAD/NADP-dependent betaine aldehyde dehydrogenase"/>
    <property type="match status" value="1"/>
</dbReference>
<dbReference type="Gene3D" id="3.40.605.10">
    <property type="entry name" value="Aldehyde Dehydrogenase, Chain A, domain 1"/>
    <property type="match status" value="1"/>
</dbReference>
<dbReference type="Gene3D" id="3.40.309.10">
    <property type="entry name" value="Aldehyde Dehydrogenase, Chain A, domain 2"/>
    <property type="match status" value="1"/>
</dbReference>
<dbReference type="HAMAP" id="MF_00804">
    <property type="entry name" value="BADH"/>
    <property type="match status" value="1"/>
</dbReference>
<dbReference type="InterPro" id="IPR016161">
    <property type="entry name" value="Ald_DH/histidinol_DH"/>
</dbReference>
<dbReference type="InterPro" id="IPR016163">
    <property type="entry name" value="Ald_DH_C"/>
</dbReference>
<dbReference type="InterPro" id="IPR016160">
    <property type="entry name" value="Ald_DH_CS_CYS"/>
</dbReference>
<dbReference type="InterPro" id="IPR029510">
    <property type="entry name" value="Ald_DH_CS_GLU"/>
</dbReference>
<dbReference type="InterPro" id="IPR016162">
    <property type="entry name" value="Ald_DH_N"/>
</dbReference>
<dbReference type="InterPro" id="IPR015590">
    <property type="entry name" value="Aldehyde_DH_dom"/>
</dbReference>
<dbReference type="InterPro" id="IPR011264">
    <property type="entry name" value="BADH"/>
</dbReference>
<dbReference type="NCBIfam" id="TIGR01804">
    <property type="entry name" value="BADH"/>
    <property type="match status" value="1"/>
</dbReference>
<dbReference type="NCBIfam" id="NF009725">
    <property type="entry name" value="PRK13252.1"/>
    <property type="match status" value="1"/>
</dbReference>
<dbReference type="PANTHER" id="PTHR11699">
    <property type="entry name" value="ALDEHYDE DEHYDROGENASE-RELATED"/>
    <property type="match status" value="1"/>
</dbReference>
<dbReference type="Pfam" id="PF00171">
    <property type="entry name" value="Aldedh"/>
    <property type="match status" value="1"/>
</dbReference>
<dbReference type="SUPFAM" id="SSF53720">
    <property type="entry name" value="ALDH-like"/>
    <property type="match status" value="1"/>
</dbReference>
<dbReference type="PROSITE" id="PS00070">
    <property type="entry name" value="ALDEHYDE_DEHYDR_CYS"/>
    <property type="match status" value="1"/>
</dbReference>
<dbReference type="PROSITE" id="PS00687">
    <property type="entry name" value="ALDEHYDE_DEHYDR_GLU"/>
    <property type="match status" value="1"/>
</dbReference>
<sequence>MSRMAEQQLYIHGGYTSATSGRTFETINPANGNVLATVQAAGREDVDRAVKSAQQGQKIWASMTAMERSRILRRAVDILRERNDELAKLETLDTGKAYSETSTVDIVTGADVLEYYAGLIPALEGSQIPLRETSFVYTRREPLGVVAGIGAWNYPIQIALWKSAPALAAGNAMIFKPSEVTPLTALKLAEIYSEAGLPNGVFNVLPGVGAETGQYLTEHPGIAKVSFTGGVASGKKVMANSAASSLKEVTMELGGKSPLIVFDDADLDLAADIAMMANFFSSGQVCTNGTRVFVPAKCKAAFEQKILARVERIRAGDVFDPQTNFGPLVSFPHRDNVLRYIAKGKEEGARVLCGGDVLKGDGFDNGAWVAPTVFTDCSDDMTIVREEIFGPVMSILTYESEDEVIRRANDTDYGLAAGIVTADLNRAHRVIHQLEAGICWINTWGESPAEMPVGGYKHSGIGRENGMMTLQSYTQVKSIQVEMAKFQSIF</sequence>
<accession>B1J0W5</accession>
<gene>
    <name evidence="1" type="primary">betB</name>
    <name type="ordered locus">EcolC_3311</name>
</gene>
<evidence type="ECO:0000255" key="1">
    <source>
        <dbReference type="HAMAP-Rule" id="MF_00804"/>
    </source>
</evidence>
<protein>
    <recommendedName>
        <fullName evidence="1">Betaine aldehyde dehydrogenase</fullName>
        <shortName evidence="1">BADH</shortName>
        <ecNumber evidence="1">1.2.1.8</ecNumber>
    </recommendedName>
</protein>
<feature type="chain" id="PRO_0000452346" description="Betaine aldehyde dehydrogenase">
    <location>
        <begin position="1"/>
        <end position="490"/>
    </location>
</feature>
<feature type="active site" description="Charge relay system" evidence="1">
    <location>
        <position position="162"/>
    </location>
</feature>
<feature type="active site" description="Proton acceptor" evidence="1">
    <location>
        <position position="252"/>
    </location>
</feature>
<feature type="active site" description="Nucleophile" evidence="1">
    <location>
        <position position="286"/>
    </location>
</feature>
<feature type="active site" description="Charge relay system" evidence="1">
    <location>
        <position position="464"/>
    </location>
</feature>
<feature type="binding site" evidence="1">
    <location>
        <position position="26"/>
    </location>
    <ligand>
        <name>K(+)</name>
        <dbReference type="ChEBI" id="CHEBI:29103"/>
        <label>1</label>
    </ligand>
</feature>
<feature type="binding site" evidence="1">
    <location>
        <position position="27"/>
    </location>
    <ligand>
        <name>K(+)</name>
        <dbReference type="ChEBI" id="CHEBI:29103"/>
        <label>1</label>
    </ligand>
</feature>
<feature type="binding site" evidence="1">
    <location>
        <position position="93"/>
    </location>
    <ligand>
        <name>K(+)</name>
        <dbReference type="ChEBI" id="CHEBI:29103"/>
        <label>1</label>
    </ligand>
</feature>
<feature type="binding site" evidence="1">
    <location>
        <begin position="150"/>
        <end position="152"/>
    </location>
    <ligand>
        <name>NAD(+)</name>
        <dbReference type="ChEBI" id="CHEBI:57540"/>
    </ligand>
</feature>
<feature type="binding site" evidence="1">
    <location>
        <begin position="176"/>
        <end position="179"/>
    </location>
    <ligand>
        <name>NAD(+)</name>
        <dbReference type="ChEBI" id="CHEBI:57540"/>
    </ligand>
</feature>
<feature type="binding site" evidence="1">
    <location>
        <position position="180"/>
    </location>
    <ligand>
        <name>K(+)</name>
        <dbReference type="ChEBI" id="CHEBI:29103"/>
        <label>1</label>
    </ligand>
</feature>
<feature type="binding site" evidence="1">
    <location>
        <begin position="230"/>
        <end position="233"/>
    </location>
    <ligand>
        <name>NAD(+)</name>
        <dbReference type="ChEBI" id="CHEBI:57540"/>
    </ligand>
</feature>
<feature type="binding site" evidence="1">
    <location>
        <position position="246"/>
    </location>
    <ligand>
        <name>K(+)</name>
        <dbReference type="ChEBI" id="CHEBI:29103"/>
        <label>2</label>
    </ligand>
</feature>
<feature type="binding site" evidence="1">
    <location>
        <position position="254"/>
    </location>
    <ligand>
        <name>NAD(+)</name>
        <dbReference type="ChEBI" id="CHEBI:57540"/>
    </ligand>
</feature>
<feature type="binding site" description="covalent" evidence="1">
    <location>
        <position position="286"/>
    </location>
    <ligand>
        <name>NAD(+)</name>
        <dbReference type="ChEBI" id="CHEBI:57540"/>
    </ligand>
</feature>
<feature type="binding site" evidence="1">
    <location>
        <position position="387"/>
    </location>
    <ligand>
        <name>NAD(+)</name>
        <dbReference type="ChEBI" id="CHEBI:57540"/>
    </ligand>
</feature>
<feature type="binding site" evidence="1">
    <location>
        <position position="457"/>
    </location>
    <ligand>
        <name>K(+)</name>
        <dbReference type="ChEBI" id="CHEBI:29103"/>
        <label>2</label>
    </ligand>
</feature>
<feature type="binding site" evidence="1">
    <location>
        <position position="460"/>
    </location>
    <ligand>
        <name>K(+)</name>
        <dbReference type="ChEBI" id="CHEBI:29103"/>
        <label>2</label>
    </ligand>
</feature>
<feature type="site" description="Seems to be a necessary countercharge to the potassium cations" evidence="1">
    <location>
        <position position="248"/>
    </location>
</feature>
<feature type="modified residue" description="Cysteine sulfenic acid (-SOH)" evidence="1">
    <location>
        <position position="286"/>
    </location>
</feature>
<reference key="1">
    <citation type="submission" date="2008-02" db="EMBL/GenBank/DDBJ databases">
        <title>Complete sequence of Escherichia coli C str. ATCC 8739.</title>
        <authorList>
            <person name="Copeland A."/>
            <person name="Lucas S."/>
            <person name="Lapidus A."/>
            <person name="Glavina del Rio T."/>
            <person name="Dalin E."/>
            <person name="Tice H."/>
            <person name="Bruce D."/>
            <person name="Goodwin L."/>
            <person name="Pitluck S."/>
            <person name="Kiss H."/>
            <person name="Brettin T."/>
            <person name="Detter J.C."/>
            <person name="Han C."/>
            <person name="Kuske C.R."/>
            <person name="Schmutz J."/>
            <person name="Larimer F."/>
            <person name="Land M."/>
            <person name="Hauser L."/>
            <person name="Kyrpides N."/>
            <person name="Mikhailova N."/>
            <person name="Ingram L."/>
            <person name="Richardson P."/>
        </authorList>
    </citation>
    <scope>NUCLEOTIDE SEQUENCE [LARGE SCALE GENOMIC DNA]</scope>
    <source>
        <strain>ATCC 8739 / DSM 1576 / NBRC 3972 / NCIMB 8545 / WDCM 00012 / Crooks</strain>
    </source>
</reference>
<name>BETB_ECOLC</name>
<proteinExistence type="inferred from homology"/>
<organism>
    <name type="scientific">Escherichia coli (strain ATCC 8739 / DSM 1576 / NBRC 3972 / NCIMB 8545 / WDCM 00012 / Crooks)</name>
    <dbReference type="NCBI Taxonomy" id="481805"/>
    <lineage>
        <taxon>Bacteria</taxon>
        <taxon>Pseudomonadati</taxon>
        <taxon>Pseudomonadota</taxon>
        <taxon>Gammaproteobacteria</taxon>
        <taxon>Enterobacterales</taxon>
        <taxon>Enterobacteriaceae</taxon>
        <taxon>Escherichia</taxon>
    </lineage>
</organism>